<dbReference type="EC" id="4.3.3.6" evidence="1"/>
<dbReference type="EC" id="3.5.1.2" evidence="1"/>
<dbReference type="EMBL" id="CP000743">
    <property type="protein sequence ID" value="ABR57015.1"/>
    <property type="molecule type" value="Genomic_DNA"/>
</dbReference>
<dbReference type="RefSeq" id="WP_011974147.1">
    <property type="nucleotide sequence ID" value="NC_009635.1"/>
</dbReference>
<dbReference type="SMR" id="A6UWZ3"/>
<dbReference type="STRING" id="419665.Maeo_1439"/>
<dbReference type="GeneID" id="5327443"/>
<dbReference type="KEGG" id="mae:Maeo_1439"/>
<dbReference type="eggNOG" id="arCOG00034">
    <property type="taxonomic scope" value="Archaea"/>
</dbReference>
<dbReference type="HOGENOM" id="CLU_069674_2_0_2"/>
<dbReference type="OrthoDB" id="26717at2157"/>
<dbReference type="UniPathway" id="UPA00245"/>
<dbReference type="Proteomes" id="UP000001106">
    <property type="component" value="Chromosome"/>
</dbReference>
<dbReference type="GO" id="GO:0005829">
    <property type="term" value="C:cytosol"/>
    <property type="evidence" value="ECO:0007669"/>
    <property type="project" value="TreeGrafter"/>
</dbReference>
<dbReference type="GO" id="GO:1903600">
    <property type="term" value="C:glutaminase complex"/>
    <property type="evidence" value="ECO:0007669"/>
    <property type="project" value="TreeGrafter"/>
</dbReference>
<dbReference type="GO" id="GO:0004359">
    <property type="term" value="F:glutaminase activity"/>
    <property type="evidence" value="ECO:0007669"/>
    <property type="project" value="UniProtKB-UniRule"/>
</dbReference>
<dbReference type="GO" id="GO:0036381">
    <property type="term" value="F:pyridoxal 5'-phosphate synthase (glutamine hydrolysing) activity"/>
    <property type="evidence" value="ECO:0007669"/>
    <property type="project" value="UniProtKB-UniRule"/>
</dbReference>
<dbReference type="GO" id="GO:0006543">
    <property type="term" value="P:glutamine catabolic process"/>
    <property type="evidence" value="ECO:0007669"/>
    <property type="project" value="UniProtKB-UniRule"/>
</dbReference>
<dbReference type="GO" id="GO:0042823">
    <property type="term" value="P:pyridoxal phosphate biosynthetic process"/>
    <property type="evidence" value="ECO:0007669"/>
    <property type="project" value="UniProtKB-UniRule"/>
</dbReference>
<dbReference type="GO" id="GO:0008614">
    <property type="term" value="P:pyridoxine metabolic process"/>
    <property type="evidence" value="ECO:0007669"/>
    <property type="project" value="TreeGrafter"/>
</dbReference>
<dbReference type="CDD" id="cd01749">
    <property type="entry name" value="GATase1_PB"/>
    <property type="match status" value="1"/>
</dbReference>
<dbReference type="FunFam" id="3.40.50.880:FF:000010">
    <property type="entry name" value="uncharacterized protein LOC100176842 isoform X2"/>
    <property type="match status" value="1"/>
</dbReference>
<dbReference type="Gene3D" id="3.40.50.880">
    <property type="match status" value="1"/>
</dbReference>
<dbReference type="HAMAP" id="MF_01615">
    <property type="entry name" value="PdxT"/>
    <property type="match status" value="1"/>
</dbReference>
<dbReference type="InterPro" id="IPR029062">
    <property type="entry name" value="Class_I_gatase-like"/>
</dbReference>
<dbReference type="InterPro" id="IPR002161">
    <property type="entry name" value="PdxT/SNO"/>
</dbReference>
<dbReference type="InterPro" id="IPR021196">
    <property type="entry name" value="PdxT/SNO_CS"/>
</dbReference>
<dbReference type="NCBIfam" id="TIGR03800">
    <property type="entry name" value="PLP_synth_Pdx2"/>
    <property type="match status" value="1"/>
</dbReference>
<dbReference type="PANTHER" id="PTHR31559">
    <property type="entry name" value="PYRIDOXAL 5'-PHOSPHATE SYNTHASE SUBUNIT SNO"/>
    <property type="match status" value="1"/>
</dbReference>
<dbReference type="PANTHER" id="PTHR31559:SF0">
    <property type="entry name" value="PYRIDOXAL 5'-PHOSPHATE SYNTHASE SUBUNIT SNO1-RELATED"/>
    <property type="match status" value="1"/>
</dbReference>
<dbReference type="Pfam" id="PF01174">
    <property type="entry name" value="SNO"/>
    <property type="match status" value="1"/>
</dbReference>
<dbReference type="PIRSF" id="PIRSF005639">
    <property type="entry name" value="Glut_amidoT_SNO"/>
    <property type="match status" value="1"/>
</dbReference>
<dbReference type="SUPFAM" id="SSF52317">
    <property type="entry name" value="Class I glutamine amidotransferase-like"/>
    <property type="match status" value="1"/>
</dbReference>
<dbReference type="PROSITE" id="PS01236">
    <property type="entry name" value="PDXT_SNO_1"/>
    <property type="match status" value="1"/>
</dbReference>
<dbReference type="PROSITE" id="PS51130">
    <property type="entry name" value="PDXT_SNO_2"/>
    <property type="match status" value="1"/>
</dbReference>
<gene>
    <name evidence="1" type="primary">pdxT</name>
    <name type="ordered locus">Maeo_1439</name>
</gene>
<name>PDXT_META3</name>
<evidence type="ECO:0000255" key="1">
    <source>
        <dbReference type="HAMAP-Rule" id="MF_01615"/>
    </source>
</evidence>
<sequence>MNIGILGIQGDIEEHEEMIKKINHAPKRIRTIEDLKNIDALIIPGGESSTMGKLMKTYGFIEALKNADLPILGTCAGMVLLSKGTGKEQPLLELMDITINRNAYGSQKYSFESELELNGIKINAVFIRAPTVDKILSDEVEIIAKEGGNIVGVKQGKYMAIAFHPELSEEGYKFYEYFLNEVVKND</sequence>
<organism>
    <name type="scientific">Methanococcus aeolicus (strain ATCC BAA-1280 / DSM 17508 / OCM 812 / Nankai-3)</name>
    <dbReference type="NCBI Taxonomy" id="419665"/>
    <lineage>
        <taxon>Archaea</taxon>
        <taxon>Methanobacteriati</taxon>
        <taxon>Methanobacteriota</taxon>
        <taxon>Methanomada group</taxon>
        <taxon>Methanococci</taxon>
        <taxon>Methanococcales</taxon>
        <taxon>Methanococcaceae</taxon>
        <taxon>Methanococcus</taxon>
    </lineage>
</organism>
<reference key="1">
    <citation type="submission" date="2007-06" db="EMBL/GenBank/DDBJ databases">
        <title>Complete sequence of Methanococcus aeolicus Nankai-3.</title>
        <authorList>
            <consortium name="US DOE Joint Genome Institute"/>
            <person name="Copeland A."/>
            <person name="Lucas S."/>
            <person name="Lapidus A."/>
            <person name="Barry K."/>
            <person name="Glavina del Rio T."/>
            <person name="Dalin E."/>
            <person name="Tice H."/>
            <person name="Pitluck S."/>
            <person name="Chain P."/>
            <person name="Malfatti S."/>
            <person name="Shin M."/>
            <person name="Vergez L."/>
            <person name="Schmutz J."/>
            <person name="Larimer F."/>
            <person name="Land M."/>
            <person name="Hauser L."/>
            <person name="Kyrpides N."/>
            <person name="Lykidis A."/>
            <person name="Sieprawska-Lupa M."/>
            <person name="Whitman W.B."/>
            <person name="Richardson P."/>
        </authorList>
    </citation>
    <scope>NUCLEOTIDE SEQUENCE [LARGE SCALE GENOMIC DNA]</scope>
    <source>
        <strain>ATCC BAA-1280 / DSM 17508 / OCM 812 / Nankai-3</strain>
    </source>
</reference>
<comment type="function">
    <text evidence="1">Catalyzes the hydrolysis of glutamine to glutamate and ammonia as part of the biosynthesis of pyridoxal 5'-phosphate. The resulting ammonia molecule is channeled to the active site of PdxS.</text>
</comment>
<comment type="catalytic activity">
    <reaction evidence="1">
        <text>aldehydo-D-ribose 5-phosphate + D-glyceraldehyde 3-phosphate + L-glutamine = pyridoxal 5'-phosphate + L-glutamate + phosphate + 3 H2O + H(+)</text>
        <dbReference type="Rhea" id="RHEA:31507"/>
        <dbReference type="ChEBI" id="CHEBI:15377"/>
        <dbReference type="ChEBI" id="CHEBI:15378"/>
        <dbReference type="ChEBI" id="CHEBI:29985"/>
        <dbReference type="ChEBI" id="CHEBI:43474"/>
        <dbReference type="ChEBI" id="CHEBI:58273"/>
        <dbReference type="ChEBI" id="CHEBI:58359"/>
        <dbReference type="ChEBI" id="CHEBI:59776"/>
        <dbReference type="ChEBI" id="CHEBI:597326"/>
        <dbReference type="EC" id="4.3.3.6"/>
    </reaction>
</comment>
<comment type="catalytic activity">
    <reaction evidence="1">
        <text>L-glutamine + H2O = L-glutamate + NH4(+)</text>
        <dbReference type="Rhea" id="RHEA:15889"/>
        <dbReference type="ChEBI" id="CHEBI:15377"/>
        <dbReference type="ChEBI" id="CHEBI:28938"/>
        <dbReference type="ChEBI" id="CHEBI:29985"/>
        <dbReference type="ChEBI" id="CHEBI:58359"/>
        <dbReference type="EC" id="3.5.1.2"/>
    </reaction>
</comment>
<comment type="pathway">
    <text evidence="1">Cofactor biosynthesis; pyridoxal 5'-phosphate biosynthesis.</text>
</comment>
<comment type="subunit">
    <text evidence="1">In the presence of PdxS, forms a dodecamer of heterodimers. Only shows activity in the heterodimer.</text>
</comment>
<comment type="similarity">
    <text evidence="1">Belongs to the glutaminase PdxT/SNO family.</text>
</comment>
<accession>A6UWZ3</accession>
<proteinExistence type="inferred from homology"/>
<feature type="chain" id="PRO_1000073629" description="Pyridoxal 5'-phosphate synthase subunit PdxT">
    <location>
        <begin position="1"/>
        <end position="186"/>
    </location>
</feature>
<feature type="active site" description="Nucleophile" evidence="1">
    <location>
        <position position="75"/>
    </location>
</feature>
<feature type="active site" description="Charge relay system" evidence="1">
    <location>
        <position position="164"/>
    </location>
</feature>
<feature type="active site" description="Charge relay system" evidence="1">
    <location>
        <position position="166"/>
    </location>
</feature>
<feature type="binding site" evidence="1">
    <location>
        <begin position="46"/>
        <end position="48"/>
    </location>
    <ligand>
        <name>L-glutamine</name>
        <dbReference type="ChEBI" id="CHEBI:58359"/>
    </ligand>
</feature>
<feature type="binding site" evidence="1">
    <location>
        <position position="101"/>
    </location>
    <ligand>
        <name>L-glutamine</name>
        <dbReference type="ChEBI" id="CHEBI:58359"/>
    </ligand>
</feature>
<feature type="binding site" evidence="1">
    <location>
        <begin position="127"/>
        <end position="128"/>
    </location>
    <ligand>
        <name>L-glutamine</name>
        <dbReference type="ChEBI" id="CHEBI:58359"/>
    </ligand>
</feature>
<protein>
    <recommendedName>
        <fullName evidence="1">Pyridoxal 5'-phosphate synthase subunit PdxT</fullName>
        <ecNumber evidence="1">4.3.3.6</ecNumber>
    </recommendedName>
    <alternativeName>
        <fullName evidence="1">Pdx2</fullName>
    </alternativeName>
    <alternativeName>
        <fullName evidence="1">Pyridoxal 5'-phosphate synthase glutaminase subunit</fullName>
        <ecNumber evidence="1">3.5.1.2</ecNumber>
    </alternativeName>
</protein>
<keyword id="KW-0315">Glutamine amidotransferase</keyword>
<keyword id="KW-0378">Hydrolase</keyword>
<keyword id="KW-0456">Lyase</keyword>
<keyword id="KW-0663">Pyridoxal phosphate</keyword>